<keyword id="KW-0143">Chaperone</keyword>
<keyword id="KW-0963">Cytoplasm</keyword>
<keyword id="KW-0346">Stress response</keyword>
<organism>
    <name type="scientific">Acinetobacter baumannii (strain ACICU)</name>
    <dbReference type="NCBI Taxonomy" id="405416"/>
    <lineage>
        <taxon>Bacteria</taxon>
        <taxon>Pseudomonadati</taxon>
        <taxon>Pseudomonadota</taxon>
        <taxon>Gammaproteobacteria</taxon>
        <taxon>Moraxellales</taxon>
        <taxon>Moraxellaceae</taxon>
        <taxon>Acinetobacter</taxon>
        <taxon>Acinetobacter calcoaceticus/baumannii complex</taxon>
    </lineage>
</organism>
<dbReference type="EMBL" id="CP000863">
    <property type="protein sequence ID" value="ACC55344.1"/>
    <property type="molecule type" value="Genomic_DNA"/>
</dbReference>
<dbReference type="RefSeq" id="WP_001262789.1">
    <property type="nucleotide sequence ID" value="NZ_CP031380.1"/>
</dbReference>
<dbReference type="SMR" id="B2HZZ8"/>
<dbReference type="GeneID" id="92891967"/>
<dbReference type="KEGG" id="abc:ACICU_00032"/>
<dbReference type="HOGENOM" id="CLU_057217_6_0_6"/>
<dbReference type="Proteomes" id="UP000008839">
    <property type="component" value="Chromosome"/>
</dbReference>
<dbReference type="GO" id="GO:0005829">
    <property type="term" value="C:cytosol"/>
    <property type="evidence" value="ECO:0007669"/>
    <property type="project" value="TreeGrafter"/>
</dbReference>
<dbReference type="GO" id="GO:0000774">
    <property type="term" value="F:adenyl-nucleotide exchange factor activity"/>
    <property type="evidence" value="ECO:0007669"/>
    <property type="project" value="InterPro"/>
</dbReference>
<dbReference type="GO" id="GO:0042803">
    <property type="term" value="F:protein homodimerization activity"/>
    <property type="evidence" value="ECO:0007669"/>
    <property type="project" value="InterPro"/>
</dbReference>
<dbReference type="GO" id="GO:0051087">
    <property type="term" value="F:protein-folding chaperone binding"/>
    <property type="evidence" value="ECO:0007669"/>
    <property type="project" value="InterPro"/>
</dbReference>
<dbReference type="GO" id="GO:0051082">
    <property type="term" value="F:unfolded protein binding"/>
    <property type="evidence" value="ECO:0007669"/>
    <property type="project" value="TreeGrafter"/>
</dbReference>
<dbReference type="GO" id="GO:0006457">
    <property type="term" value="P:protein folding"/>
    <property type="evidence" value="ECO:0007669"/>
    <property type="project" value="InterPro"/>
</dbReference>
<dbReference type="CDD" id="cd00446">
    <property type="entry name" value="GrpE"/>
    <property type="match status" value="1"/>
</dbReference>
<dbReference type="Gene3D" id="3.90.20.20">
    <property type="match status" value="1"/>
</dbReference>
<dbReference type="Gene3D" id="2.30.22.10">
    <property type="entry name" value="Head domain of nucleotide exchange factor GrpE"/>
    <property type="match status" value="1"/>
</dbReference>
<dbReference type="HAMAP" id="MF_01151">
    <property type="entry name" value="GrpE"/>
    <property type="match status" value="1"/>
</dbReference>
<dbReference type="InterPro" id="IPR000740">
    <property type="entry name" value="GrpE"/>
</dbReference>
<dbReference type="InterPro" id="IPR013805">
    <property type="entry name" value="GrpE_coiled_coil"/>
</dbReference>
<dbReference type="InterPro" id="IPR009012">
    <property type="entry name" value="GrpE_head"/>
</dbReference>
<dbReference type="PANTHER" id="PTHR21237">
    <property type="entry name" value="GRPE PROTEIN"/>
    <property type="match status" value="1"/>
</dbReference>
<dbReference type="PANTHER" id="PTHR21237:SF23">
    <property type="entry name" value="GRPE PROTEIN HOMOLOG, MITOCHONDRIAL"/>
    <property type="match status" value="1"/>
</dbReference>
<dbReference type="Pfam" id="PF01025">
    <property type="entry name" value="GrpE"/>
    <property type="match status" value="1"/>
</dbReference>
<dbReference type="PRINTS" id="PR00773">
    <property type="entry name" value="GRPEPROTEIN"/>
</dbReference>
<dbReference type="SUPFAM" id="SSF58014">
    <property type="entry name" value="Coiled-coil domain of nucleotide exchange factor GrpE"/>
    <property type="match status" value="1"/>
</dbReference>
<dbReference type="SUPFAM" id="SSF51064">
    <property type="entry name" value="Head domain of nucleotide exchange factor GrpE"/>
    <property type="match status" value="1"/>
</dbReference>
<dbReference type="PROSITE" id="PS01071">
    <property type="entry name" value="GRPE"/>
    <property type="match status" value="1"/>
</dbReference>
<protein>
    <recommendedName>
        <fullName evidence="1">Protein GrpE</fullName>
    </recommendedName>
    <alternativeName>
        <fullName evidence="1">HSP-70 cofactor</fullName>
    </alternativeName>
</protein>
<reference key="1">
    <citation type="journal article" date="2008" name="Antimicrob. Agents Chemother.">
        <title>Whole-genome pyrosequencing of an epidemic multidrug-resistant Acinetobacter baumannii strain belonging to the European clone II group.</title>
        <authorList>
            <person name="Iacono M."/>
            <person name="Villa L."/>
            <person name="Fortini D."/>
            <person name="Bordoni R."/>
            <person name="Imperi F."/>
            <person name="Bonnal R.J."/>
            <person name="Sicheritz-Ponten T."/>
            <person name="De Bellis G."/>
            <person name="Visca P."/>
            <person name="Cassone A."/>
            <person name="Carattoli A."/>
        </authorList>
    </citation>
    <scope>NUCLEOTIDE SEQUENCE [LARGE SCALE GENOMIC DNA]</scope>
    <source>
        <strain>ACICU</strain>
    </source>
</reference>
<accession>B2HZZ8</accession>
<sequence length="184" mass="20359">MANEQNEQAQDIQNEQVEQSNEQTQAEGVEQANDVTVESLQAQITKLEENLKLEKARTANAVYEAQKSVERIQRESEKHKETVLEKFAKELLDSVDNLERAIQAAGDEETPVLEGVKLTLKSLLTTLEKFGVVEADTQNGFNADLHQAVGIDPNAKANEIGTVLQKGYTLNGRLLRPAMVMVGQ</sequence>
<comment type="function">
    <text evidence="1">Participates actively in the response to hyperosmotic and heat shock by preventing the aggregation of stress-denatured proteins, in association with DnaK and GrpE. It is the nucleotide exchange factor for DnaK and may function as a thermosensor. Unfolded proteins bind initially to DnaJ; upon interaction with the DnaJ-bound protein, DnaK hydrolyzes its bound ATP, resulting in the formation of a stable complex. GrpE releases ADP from DnaK; ATP binding to DnaK triggers the release of the substrate protein, thus completing the reaction cycle. Several rounds of ATP-dependent interactions between DnaJ, DnaK and GrpE are required for fully efficient folding.</text>
</comment>
<comment type="subunit">
    <text evidence="1">Homodimer.</text>
</comment>
<comment type="subcellular location">
    <subcellularLocation>
        <location evidence="1">Cytoplasm</location>
    </subcellularLocation>
</comment>
<comment type="similarity">
    <text evidence="1">Belongs to the GrpE family.</text>
</comment>
<evidence type="ECO:0000255" key="1">
    <source>
        <dbReference type="HAMAP-Rule" id="MF_01151"/>
    </source>
</evidence>
<evidence type="ECO:0000256" key="2">
    <source>
        <dbReference type="SAM" id="MobiDB-lite"/>
    </source>
</evidence>
<name>GRPE_ACIBC</name>
<proteinExistence type="inferred from homology"/>
<gene>
    <name evidence="1" type="primary">grpE</name>
    <name type="ordered locus">ACICU_00032</name>
</gene>
<feature type="chain" id="PRO_1000137524" description="Protein GrpE">
    <location>
        <begin position="1"/>
        <end position="184"/>
    </location>
</feature>
<feature type="region of interest" description="Disordered" evidence="2">
    <location>
        <begin position="1"/>
        <end position="34"/>
    </location>
</feature>
<feature type="compositionally biased region" description="Polar residues" evidence="2">
    <location>
        <begin position="1"/>
        <end position="26"/>
    </location>
</feature>